<accession>P0C0C2</accession>
<accession>O33723</accession>
<accession>P0A3E8</accession>
<accession>Q48YY3</accession>
<accession>Q8P153</accession>
<protein>
    <recommendedName>
        <fullName>GTP cyclohydrolase 1</fullName>
        <ecNumber>3.5.4.16</ecNumber>
    </recommendedName>
    <alternativeName>
        <fullName>GTP cyclohydrolase I</fullName>
        <shortName>GTP-CH-I</shortName>
    </alternativeName>
</protein>
<evidence type="ECO:0000250" key="1"/>
<evidence type="ECO:0000305" key="2"/>
<name>GCH1_STRP1</name>
<reference key="1">
    <citation type="journal article" date="2001" name="Proc. Natl. Acad. Sci. U.S.A.">
        <title>Complete genome sequence of an M1 strain of Streptococcus pyogenes.</title>
        <authorList>
            <person name="Ferretti J.J."/>
            <person name="McShan W.M."/>
            <person name="Ajdic D.J."/>
            <person name="Savic D.J."/>
            <person name="Savic G."/>
            <person name="Lyon K."/>
            <person name="Primeaux C."/>
            <person name="Sezate S."/>
            <person name="Suvorov A.N."/>
            <person name="Kenton S."/>
            <person name="Lai H.S."/>
            <person name="Lin S.P."/>
            <person name="Qian Y."/>
            <person name="Jia H.G."/>
            <person name="Najar F.Z."/>
            <person name="Ren Q."/>
            <person name="Zhu H."/>
            <person name="Song L."/>
            <person name="White J."/>
            <person name="Yuan X."/>
            <person name="Clifton S.W."/>
            <person name="Roe B.A."/>
            <person name="McLaughlin R.E."/>
        </authorList>
    </citation>
    <scope>NUCLEOTIDE SEQUENCE [LARGE SCALE GENOMIC DNA]</scope>
    <source>
        <strain>ATCC 700294 / SF370 / Serotype M1</strain>
    </source>
</reference>
<reference key="2">
    <citation type="journal article" date="2005" name="J. Infect. Dis.">
        <title>Evolutionary origin and emergence of a highly successful clone of serotype M1 group A Streptococcus involved multiple horizontal gene transfer events.</title>
        <authorList>
            <person name="Sumby P."/>
            <person name="Porcella S.F."/>
            <person name="Madrigal A.G."/>
            <person name="Barbian K.D."/>
            <person name="Virtaneva K."/>
            <person name="Ricklefs S.M."/>
            <person name="Sturdevant D.E."/>
            <person name="Graham M.R."/>
            <person name="Vuopio-Varkila J."/>
            <person name="Hoe N.P."/>
            <person name="Musser J.M."/>
        </authorList>
    </citation>
    <scope>NUCLEOTIDE SEQUENCE [LARGE SCALE GENOMIC DNA]</scope>
    <source>
        <strain>ATCC BAA-947 / MGAS5005 / Serotype M1</strain>
    </source>
</reference>
<keyword id="KW-0342">GTP-binding</keyword>
<keyword id="KW-0378">Hydrolase</keyword>
<keyword id="KW-0479">Metal-binding</keyword>
<keyword id="KW-0547">Nucleotide-binding</keyword>
<keyword id="KW-0554">One-carbon metabolism</keyword>
<keyword id="KW-1185">Reference proteome</keyword>
<keyword id="KW-0862">Zinc</keyword>
<proteinExistence type="inferred from homology"/>
<gene>
    <name type="primary">folE</name>
    <name type="ordered locus">SPy_1097</name>
    <name type="ordered locus">M5005_Spy0821</name>
</gene>
<sequence>MKRERLMSINKEKAEAAIYQFLEAIGENPNREGLLDTPKRVAKMYAEMFLGLGKDPKEEFTAVFKEQHEDVVIVKDISFYSICEHHLVPFYGKAHIAYLPSDGRVTGLSKLARAVEVASKRPQLQERLTSQIADALVEALNPKGTLVMVEAEHMCMTMRGIKKPGSKTITTTARGLYKESRAERQEVISLMTKD</sequence>
<comment type="catalytic activity">
    <reaction>
        <text>GTP + H2O = 7,8-dihydroneopterin 3'-triphosphate + formate + H(+)</text>
        <dbReference type="Rhea" id="RHEA:17473"/>
        <dbReference type="ChEBI" id="CHEBI:15377"/>
        <dbReference type="ChEBI" id="CHEBI:15378"/>
        <dbReference type="ChEBI" id="CHEBI:15740"/>
        <dbReference type="ChEBI" id="CHEBI:37565"/>
        <dbReference type="ChEBI" id="CHEBI:58462"/>
        <dbReference type="EC" id="3.5.4.16"/>
    </reaction>
</comment>
<comment type="pathway">
    <text>Cofactor biosynthesis; 7,8-dihydroneopterin triphosphate biosynthesis; 7,8-dihydroneopterin triphosphate from GTP: step 1/1.</text>
</comment>
<comment type="subunit">
    <text evidence="1">Toroid-shaped homodecamer, composed of two pentamers of five dimers.</text>
</comment>
<comment type="similarity">
    <text evidence="2">Belongs to the GTP cyclohydrolase I family.</text>
</comment>
<comment type="sequence caution" evidence="2">
    <conflict type="erroneous initiation">
        <sequence resource="EMBL-CDS" id="AAK33975"/>
    </conflict>
</comment>
<comment type="sequence caution" evidence="2">
    <conflict type="erroneous initiation">
        <sequence resource="EMBL-CDS" id="AAZ51439"/>
    </conflict>
</comment>
<feature type="chain" id="PRO_0000119452" description="GTP cyclohydrolase 1">
    <location>
        <begin position="1"/>
        <end position="194"/>
    </location>
</feature>
<feature type="binding site" evidence="1">
    <location>
        <position position="83"/>
    </location>
    <ligand>
        <name>Zn(2+)</name>
        <dbReference type="ChEBI" id="CHEBI:29105"/>
    </ligand>
</feature>
<feature type="binding site" evidence="1">
    <location>
        <position position="86"/>
    </location>
    <ligand>
        <name>Zn(2+)</name>
        <dbReference type="ChEBI" id="CHEBI:29105"/>
    </ligand>
</feature>
<feature type="binding site" evidence="1">
    <location>
        <position position="155"/>
    </location>
    <ligand>
        <name>Zn(2+)</name>
        <dbReference type="ChEBI" id="CHEBI:29105"/>
    </ligand>
</feature>
<dbReference type="EC" id="3.5.4.16"/>
<dbReference type="EMBL" id="AE004092">
    <property type="protein sequence ID" value="AAK33975.1"/>
    <property type="status" value="ALT_INIT"/>
    <property type="molecule type" value="Genomic_DNA"/>
</dbReference>
<dbReference type="EMBL" id="CP000017">
    <property type="protein sequence ID" value="AAZ51439.1"/>
    <property type="status" value="ALT_INIT"/>
    <property type="molecule type" value="Genomic_DNA"/>
</dbReference>
<dbReference type="RefSeq" id="NP_269254.1">
    <property type="nucleotide sequence ID" value="NC_002737.2"/>
</dbReference>
<dbReference type="SMR" id="P0C0C2"/>
<dbReference type="PaxDb" id="1314-HKU360_00886"/>
<dbReference type="KEGG" id="spy:SPy_1097"/>
<dbReference type="KEGG" id="spz:M5005_Spy0821"/>
<dbReference type="PATRIC" id="fig|160490.10.peg.953"/>
<dbReference type="HOGENOM" id="CLU_049768_3_3_9"/>
<dbReference type="OMA" id="CEHMCMS"/>
<dbReference type="UniPathway" id="UPA00848">
    <property type="reaction ID" value="UER00151"/>
</dbReference>
<dbReference type="Proteomes" id="UP000000750">
    <property type="component" value="Chromosome"/>
</dbReference>
<dbReference type="GO" id="GO:0005737">
    <property type="term" value="C:cytoplasm"/>
    <property type="evidence" value="ECO:0007669"/>
    <property type="project" value="TreeGrafter"/>
</dbReference>
<dbReference type="GO" id="GO:0005525">
    <property type="term" value="F:GTP binding"/>
    <property type="evidence" value="ECO:0007669"/>
    <property type="project" value="UniProtKB-KW"/>
</dbReference>
<dbReference type="GO" id="GO:0003934">
    <property type="term" value="F:GTP cyclohydrolase I activity"/>
    <property type="evidence" value="ECO:0007669"/>
    <property type="project" value="UniProtKB-UniRule"/>
</dbReference>
<dbReference type="GO" id="GO:0008270">
    <property type="term" value="F:zinc ion binding"/>
    <property type="evidence" value="ECO:0007669"/>
    <property type="project" value="UniProtKB-UniRule"/>
</dbReference>
<dbReference type="GO" id="GO:0006730">
    <property type="term" value="P:one-carbon metabolic process"/>
    <property type="evidence" value="ECO:0007669"/>
    <property type="project" value="UniProtKB-UniRule"/>
</dbReference>
<dbReference type="GO" id="GO:0006729">
    <property type="term" value="P:tetrahydrobiopterin biosynthetic process"/>
    <property type="evidence" value="ECO:0007669"/>
    <property type="project" value="TreeGrafter"/>
</dbReference>
<dbReference type="GO" id="GO:0046654">
    <property type="term" value="P:tetrahydrofolate biosynthetic process"/>
    <property type="evidence" value="ECO:0007669"/>
    <property type="project" value="UniProtKB-UniRule"/>
</dbReference>
<dbReference type="FunFam" id="1.10.286.10:FF:000001">
    <property type="entry name" value="GTP cyclohydrolase 1"/>
    <property type="match status" value="1"/>
</dbReference>
<dbReference type="FunFam" id="3.30.1130.10:FF:000001">
    <property type="entry name" value="GTP cyclohydrolase 1"/>
    <property type="match status" value="1"/>
</dbReference>
<dbReference type="Gene3D" id="1.10.286.10">
    <property type="match status" value="1"/>
</dbReference>
<dbReference type="Gene3D" id="3.30.1130.10">
    <property type="match status" value="1"/>
</dbReference>
<dbReference type="HAMAP" id="MF_00223">
    <property type="entry name" value="FolE"/>
    <property type="match status" value="1"/>
</dbReference>
<dbReference type="InterPro" id="IPR043133">
    <property type="entry name" value="GTP-CH-I_C/QueF"/>
</dbReference>
<dbReference type="InterPro" id="IPR043134">
    <property type="entry name" value="GTP-CH-I_N"/>
</dbReference>
<dbReference type="InterPro" id="IPR001474">
    <property type="entry name" value="GTP_CycHdrlase_I"/>
</dbReference>
<dbReference type="InterPro" id="IPR018234">
    <property type="entry name" value="GTP_CycHdrlase_I_CS"/>
</dbReference>
<dbReference type="InterPro" id="IPR020602">
    <property type="entry name" value="GTP_CycHdrlase_I_dom"/>
</dbReference>
<dbReference type="NCBIfam" id="TIGR00063">
    <property type="entry name" value="folE"/>
    <property type="match status" value="1"/>
</dbReference>
<dbReference type="NCBIfam" id="NF006825">
    <property type="entry name" value="PRK09347.1-2"/>
    <property type="match status" value="1"/>
</dbReference>
<dbReference type="NCBIfam" id="NF006826">
    <property type="entry name" value="PRK09347.1-3"/>
    <property type="match status" value="1"/>
</dbReference>
<dbReference type="PANTHER" id="PTHR11109:SF7">
    <property type="entry name" value="GTP CYCLOHYDROLASE 1"/>
    <property type="match status" value="1"/>
</dbReference>
<dbReference type="PANTHER" id="PTHR11109">
    <property type="entry name" value="GTP CYCLOHYDROLASE I"/>
    <property type="match status" value="1"/>
</dbReference>
<dbReference type="Pfam" id="PF01227">
    <property type="entry name" value="GTP_cyclohydroI"/>
    <property type="match status" value="1"/>
</dbReference>
<dbReference type="SUPFAM" id="SSF55620">
    <property type="entry name" value="Tetrahydrobiopterin biosynthesis enzymes-like"/>
    <property type="match status" value="1"/>
</dbReference>
<dbReference type="PROSITE" id="PS00859">
    <property type="entry name" value="GTP_CYCLOHYDROL_1_1"/>
    <property type="match status" value="1"/>
</dbReference>
<dbReference type="PROSITE" id="PS00860">
    <property type="entry name" value="GTP_CYCLOHYDROL_1_2"/>
    <property type="match status" value="1"/>
</dbReference>
<organism>
    <name type="scientific">Streptococcus pyogenes serotype M1</name>
    <dbReference type="NCBI Taxonomy" id="301447"/>
    <lineage>
        <taxon>Bacteria</taxon>
        <taxon>Bacillati</taxon>
        <taxon>Bacillota</taxon>
        <taxon>Bacilli</taxon>
        <taxon>Lactobacillales</taxon>
        <taxon>Streptococcaceae</taxon>
        <taxon>Streptococcus</taxon>
    </lineage>
</organism>